<feature type="chain" id="PRO_0000242764" description="Octanoyltransferase">
    <location>
        <begin position="1"/>
        <end position="213"/>
    </location>
</feature>
<feature type="domain" description="BPL/LPL catalytic" evidence="2">
    <location>
        <begin position="32"/>
        <end position="207"/>
    </location>
</feature>
<feature type="active site" description="Acyl-thioester intermediate" evidence="1">
    <location>
        <position position="169"/>
    </location>
</feature>
<feature type="binding site" evidence="1">
    <location>
        <begin position="71"/>
        <end position="78"/>
    </location>
    <ligand>
        <name>substrate</name>
    </ligand>
</feature>
<feature type="binding site" evidence="1">
    <location>
        <begin position="138"/>
        <end position="140"/>
    </location>
    <ligand>
        <name>substrate</name>
    </ligand>
</feature>
<feature type="binding site" evidence="1">
    <location>
        <begin position="151"/>
        <end position="153"/>
    </location>
    <ligand>
        <name>substrate</name>
    </ligand>
</feature>
<feature type="site" description="Lowers pKa of active site Cys" evidence="1">
    <location>
        <position position="135"/>
    </location>
</feature>
<evidence type="ECO:0000255" key="1">
    <source>
        <dbReference type="HAMAP-Rule" id="MF_00013"/>
    </source>
</evidence>
<evidence type="ECO:0000255" key="2">
    <source>
        <dbReference type="PROSITE-ProRule" id="PRU01067"/>
    </source>
</evidence>
<evidence type="ECO:0000305" key="3"/>
<gene>
    <name evidence="1" type="primary">lipB</name>
    <name type="ordered locus">SPA2099</name>
</gene>
<name>LIPB_SALPA</name>
<comment type="function">
    <text evidence="1">Catalyzes the transfer of endogenously produced octanoic acid from octanoyl-acyl-carrier-protein onto the lipoyl domains of lipoate-dependent enzymes. Lipoyl-ACP can also act as a substrate although octanoyl-ACP is likely to be the physiological substrate.</text>
</comment>
<comment type="catalytic activity">
    <reaction evidence="1">
        <text>octanoyl-[ACP] + L-lysyl-[protein] = N(6)-octanoyl-L-lysyl-[protein] + holo-[ACP] + H(+)</text>
        <dbReference type="Rhea" id="RHEA:17665"/>
        <dbReference type="Rhea" id="RHEA-COMP:9636"/>
        <dbReference type="Rhea" id="RHEA-COMP:9685"/>
        <dbReference type="Rhea" id="RHEA-COMP:9752"/>
        <dbReference type="Rhea" id="RHEA-COMP:9928"/>
        <dbReference type="ChEBI" id="CHEBI:15378"/>
        <dbReference type="ChEBI" id="CHEBI:29969"/>
        <dbReference type="ChEBI" id="CHEBI:64479"/>
        <dbReference type="ChEBI" id="CHEBI:78463"/>
        <dbReference type="ChEBI" id="CHEBI:78809"/>
        <dbReference type="EC" id="2.3.1.181"/>
    </reaction>
</comment>
<comment type="pathway">
    <text evidence="1">Protein modification; protein lipoylation via endogenous pathway; protein N(6)-(lipoyl)lysine from octanoyl-[acyl-carrier-protein]: step 1/2.</text>
</comment>
<comment type="subcellular location">
    <subcellularLocation>
        <location evidence="1">Cytoplasm</location>
    </subcellularLocation>
</comment>
<comment type="miscellaneous">
    <text evidence="1">In the reaction, the free carboxyl group of octanoic acid is attached via an amide linkage to the epsilon-amino group of a specific lysine residue of lipoyl domains of lipoate-dependent enzymes.</text>
</comment>
<comment type="similarity">
    <text evidence="1">Belongs to the LipB family.</text>
</comment>
<comment type="sequence caution" evidence="3">
    <conflict type="erroneous initiation">
        <sequence resource="EMBL-CDS" id="AAV77993"/>
    </conflict>
    <text>Truncated N-terminus.</text>
</comment>
<proteinExistence type="inferred from homology"/>
<sequence>MYQDKILVRQLGLQPYEAISQAMHNFTDMRDENSHDEIWLVEHYPVFTQGQAGKAEHILMPGDIPVVQSDRGGQVTYHGPGQQVMYVLLNLKRRKLGVRDLVTLLEQTVVNTLAEIGIEAHPRADAPGVYVGEKKICSLGLRIRRGCSFHGLALNVNMDLSPFLRINPCGYAGMEMAKITQWKEDATTDNIAPRLLANILALLNNPPYEYIAA</sequence>
<organism>
    <name type="scientific">Salmonella paratyphi A (strain ATCC 9150 / SARB42)</name>
    <dbReference type="NCBI Taxonomy" id="295319"/>
    <lineage>
        <taxon>Bacteria</taxon>
        <taxon>Pseudomonadati</taxon>
        <taxon>Pseudomonadota</taxon>
        <taxon>Gammaproteobacteria</taxon>
        <taxon>Enterobacterales</taxon>
        <taxon>Enterobacteriaceae</taxon>
        <taxon>Salmonella</taxon>
    </lineage>
</organism>
<accession>Q5PM99</accession>
<protein>
    <recommendedName>
        <fullName evidence="1">Octanoyltransferase</fullName>
        <ecNumber evidence="1">2.3.1.181</ecNumber>
    </recommendedName>
    <alternativeName>
        <fullName evidence="1">Lipoate-protein ligase B</fullName>
    </alternativeName>
    <alternativeName>
        <fullName evidence="1">Lipoyl/octanoyl transferase</fullName>
    </alternativeName>
    <alternativeName>
        <fullName evidence="1">Octanoyl-[acyl-carrier-protein]-protein N-octanoyltransferase</fullName>
    </alternativeName>
</protein>
<dbReference type="EC" id="2.3.1.181" evidence="1"/>
<dbReference type="EMBL" id="CP000026">
    <property type="protein sequence ID" value="AAV77993.1"/>
    <property type="status" value="ALT_INIT"/>
    <property type="molecule type" value="Genomic_DNA"/>
</dbReference>
<dbReference type="RefSeq" id="WP_000284009.1">
    <property type="nucleotide sequence ID" value="NC_006511.1"/>
</dbReference>
<dbReference type="SMR" id="Q5PM99"/>
<dbReference type="KEGG" id="spt:SPA2099"/>
<dbReference type="HOGENOM" id="CLU_035168_3_1_6"/>
<dbReference type="UniPathway" id="UPA00538">
    <property type="reaction ID" value="UER00592"/>
</dbReference>
<dbReference type="Proteomes" id="UP000008185">
    <property type="component" value="Chromosome"/>
</dbReference>
<dbReference type="GO" id="GO:0005737">
    <property type="term" value="C:cytoplasm"/>
    <property type="evidence" value="ECO:0007669"/>
    <property type="project" value="UniProtKB-SubCell"/>
</dbReference>
<dbReference type="GO" id="GO:0033819">
    <property type="term" value="F:lipoyl(octanoyl) transferase activity"/>
    <property type="evidence" value="ECO:0007669"/>
    <property type="project" value="UniProtKB-EC"/>
</dbReference>
<dbReference type="GO" id="GO:0036211">
    <property type="term" value="P:protein modification process"/>
    <property type="evidence" value="ECO:0007669"/>
    <property type="project" value="InterPro"/>
</dbReference>
<dbReference type="CDD" id="cd16444">
    <property type="entry name" value="LipB"/>
    <property type="match status" value="1"/>
</dbReference>
<dbReference type="FunFam" id="3.30.930.10:FF:000020">
    <property type="entry name" value="Octanoyltransferase"/>
    <property type="match status" value="1"/>
</dbReference>
<dbReference type="Gene3D" id="3.30.930.10">
    <property type="entry name" value="Bira Bifunctional Protein, Domain 2"/>
    <property type="match status" value="1"/>
</dbReference>
<dbReference type="HAMAP" id="MF_00013">
    <property type="entry name" value="LipB"/>
    <property type="match status" value="1"/>
</dbReference>
<dbReference type="InterPro" id="IPR045864">
    <property type="entry name" value="aa-tRNA-synth_II/BPL/LPL"/>
</dbReference>
<dbReference type="InterPro" id="IPR004143">
    <property type="entry name" value="BPL_LPL_catalytic"/>
</dbReference>
<dbReference type="InterPro" id="IPR000544">
    <property type="entry name" value="Octanoyltransferase"/>
</dbReference>
<dbReference type="InterPro" id="IPR020605">
    <property type="entry name" value="Octanoyltransferase_CS"/>
</dbReference>
<dbReference type="NCBIfam" id="TIGR00214">
    <property type="entry name" value="lipB"/>
    <property type="match status" value="1"/>
</dbReference>
<dbReference type="NCBIfam" id="NF010922">
    <property type="entry name" value="PRK14342.1"/>
    <property type="match status" value="1"/>
</dbReference>
<dbReference type="PANTHER" id="PTHR10993:SF7">
    <property type="entry name" value="LIPOYLTRANSFERASE 2, MITOCHONDRIAL-RELATED"/>
    <property type="match status" value="1"/>
</dbReference>
<dbReference type="PANTHER" id="PTHR10993">
    <property type="entry name" value="OCTANOYLTRANSFERASE"/>
    <property type="match status" value="1"/>
</dbReference>
<dbReference type="Pfam" id="PF21948">
    <property type="entry name" value="LplA-B_cat"/>
    <property type="match status" value="1"/>
</dbReference>
<dbReference type="PIRSF" id="PIRSF016262">
    <property type="entry name" value="LPLase"/>
    <property type="match status" value="1"/>
</dbReference>
<dbReference type="SUPFAM" id="SSF55681">
    <property type="entry name" value="Class II aaRS and biotin synthetases"/>
    <property type="match status" value="1"/>
</dbReference>
<dbReference type="PROSITE" id="PS51733">
    <property type="entry name" value="BPL_LPL_CATALYTIC"/>
    <property type="match status" value="1"/>
</dbReference>
<dbReference type="PROSITE" id="PS01313">
    <property type="entry name" value="LIPB"/>
    <property type="match status" value="1"/>
</dbReference>
<keyword id="KW-0012">Acyltransferase</keyword>
<keyword id="KW-0963">Cytoplasm</keyword>
<keyword id="KW-0808">Transferase</keyword>
<reference key="1">
    <citation type="journal article" date="2004" name="Nat. Genet.">
        <title>Comparison of genome degradation in Paratyphi A and Typhi, human-restricted serovars of Salmonella enterica that cause typhoid.</title>
        <authorList>
            <person name="McClelland M."/>
            <person name="Sanderson K.E."/>
            <person name="Clifton S.W."/>
            <person name="Latreille P."/>
            <person name="Porwollik S."/>
            <person name="Sabo A."/>
            <person name="Meyer R."/>
            <person name="Bieri T."/>
            <person name="Ozersky P."/>
            <person name="McLellan M."/>
            <person name="Harkins C.R."/>
            <person name="Wang C."/>
            <person name="Nguyen C."/>
            <person name="Berghoff A."/>
            <person name="Elliott G."/>
            <person name="Kohlberg S."/>
            <person name="Strong C."/>
            <person name="Du F."/>
            <person name="Carter J."/>
            <person name="Kremizki C."/>
            <person name="Layman D."/>
            <person name="Leonard S."/>
            <person name="Sun H."/>
            <person name="Fulton L."/>
            <person name="Nash W."/>
            <person name="Miner T."/>
            <person name="Minx P."/>
            <person name="Delehaunty K."/>
            <person name="Fronick C."/>
            <person name="Magrini V."/>
            <person name="Nhan M."/>
            <person name="Warren W."/>
            <person name="Florea L."/>
            <person name="Spieth J."/>
            <person name="Wilson R.K."/>
        </authorList>
    </citation>
    <scope>NUCLEOTIDE SEQUENCE [LARGE SCALE GENOMIC DNA]</scope>
    <source>
        <strain>ATCC 9150 / SARB42</strain>
    </source>
</reference>